<organism>
    <name type="scientific">Escherichia coli O1:K1 / APEC</name>
    <dbReference type="NCBI Taxonomy" id="405955"/>
    <lineage>
        <taxon>Bacteria</taxon>
        <taxon>Pseudomonadati</taxon>
        <taxon>Pseudomonadota</taxon>
        <taxon>Gammaproteobacteria</taxon>
        <taxon>Enterobacterales</taxon>
        <taxon>Enterobacteriaceae</taxon>
        <taxon>Escherichia</taxon>
    </lineage>
</organism>
<dbReference type="EC" id="3.1.2.12"/>
<dbReference type="EMBL" id="CP000468">
    <property type="protein sequence ID" value="ABI99823.1"/>
    <property type="molecule type" value="Genomic_DNA"/>
</dbReference>
<dbReference type="SMR" id="A1A834"/>
<dbReference type="ESTHER" id="ecoli-yaim">
    <property type="family name" value="A85-EsteraseD-FGH"/>
</dbReference>
<dbReference type="MEROPS" id="S09.940"/>
<dbReference type="KEGG" id="ecv:APECO1_1646"/>
<dbReference type="HOGENOM" id="CLU_056472_0_0_6"/>
<dbReference type="Proteomes" id="UP000008216">
    <property type="component" value="Chromosome"/>
</dbReference>
<dbReference type="GO" id="GO:0005829">
    <property type="term" value="C:cytosol"/>
    <property type="evidence" value="ECO:0007669"/>
    <property type="project" value="TreeGrafter"/>
</dbReference>
<dbReference type="GO" id="GO:0052689">
    <property type="term" value="F:carboxylic ester hydrolase activity"/>
    <property type="evidence" value="ECO:0007669"/>
    <property type="project" value="UniProtKB-KW"/>
</dbReference>
<dbReference type="GO" id="GO:0018738">
    <property type="term" value="F:S-formylglutathione hydrolase activity"/>
    <property type="evidence" value="ECO:0007669"/>
    <property type="project" value="UniProtKB-EC"/>
</dbReference>
<dbReference type="GO" id="GO:0046294">
    <property type="term" value="P:formaldehyde catabolic process"/>
    <property type="evidence" value="ECO:0007669"/>
    <property type="project" value="InterPro"/>
</dbReference>
<dbReference type="FunFam" id="3.40.50.1820:FF:000002">
    <property type="entry name" value="S-formylglutathione hydrolase"/>
    <property type="match status" value="1"/>
</dbReference>
<dbReference type="Gene3D" id="3.40.50.1820">
    <property type="entry name" value="alpha/beta hydrolase"/>
    <property type="match status" value="1"/>
</dbReference>
<dbReference type="InterPro" id="IPR029058">
    <property type="entry name" value="AB_hydrolase_fold"/>
</dbReference>
<dbReference type="InterPro" id="IPR000801">
    <property type="entry name" value="Esterase-like"/>
</dbReference>
<dbReference type="InterPro" id="IPR014186">
    <property type="entry name" value="S-formylglutathione_hydrol"/>
</dbReference>
<dbReference type="NCBIfam" id="TIGR02821">
    <property type="entry name" value="fghA_ester_D"/>
    <property type="match status" value="1"/>
</dbReference>
<dbReference type="PANTHER" id="PTHR10061">
    <property type="entry name" value="S-FORMYLGLUTATHIONE HYDROLASE"/>
    <property type="match status" value="1"/>
</dbReference>
<dbReference type="PANTHER" id="PTHR10061:SF0">
    <property type="entry name" value="S-FORMYLGLUTATHIONE HYDROLASE"/>
    <property type="match status" value="1"/>
</dbReference>
<dbReference type="Pfam" id="PF00756">
    <property type="entry name" value="Esterase"/>
    <property type="match status" value="1"/>
</dbReference>
<dbReference type="SUPFAM" id="SSF53474">
    <property type="entry name" value="alpha/beta-Hydrolases"/>
    <property type="match status" value="1"/>
</dbReference>
<keyword id="KW-0378">Hydrolase</keyword>
<keyword id="KW-1185">Reference proteome</keyword>
<keyword id="KW-0719">Serine esterase</keyword>
<gene>
    <name type="primary">frmB</name>
    <name type="ordered locus">Ecok1_03300</name>
    <name type="ORF">APECO1_1646</name>
</gene>
<sequence length="277" mass="31435">MELIEKHASFGGWQNVYRHYSQSLKCEMNVGVYLPPKAENEKLPVLYWLSGLTCNEQNFITKSGMQRYAAEHNIIVVAPDTSPRGSHVADADRYDLGQGAGFYLNATQAPWNEHYKMYDYIRNELPNLVMHHFPATARKSISGHSMGGLGALVLALRNPDEYVSVSAFSPIVSPSQVPWGQQAFAAYLGENKDAWLDYDPVSLISQGQRVAEIMVDQGLSDDFYAEQLRTPNLEKICQEMNIKTLIRYHEGYDHSYYFVSSFIGEHIAYHANKLNMR</sequence>
<feature type="chain" id="PRO_0000341660" description="S-formylglutathione hydrolase FrmB">
    <location>
        <begin position="1"/>
        <end position="277"/>
    </location>
</feature>
<feature type="active site" description="Charge relay system" evidence="1">
    <location>
        <position position="145"/>
    </location>
</feature>
<feature type="active site" description="Charge relay system" evidence="1">
    <location>
        <position position="221"/>
    </location>
</feature>
<feature type="active site" description="Charge relay system" evidence="1">
    <location>
        <position position="254"/>
    </location>
</feature>
<protein>
    <recommendedName>
        <fullName>S-formylglutathione hydrolase FrmB</fullName>
        <shortName>FGH</shortName>
        <ecNumber>3.1.2.12</ecNumber>
    </recommendedName>
</protein>
<reference key="1">
    <citation type="journal article" date="2007" name="J. Bacteriol.">
        <title>The genome sequence of avian pathogenic Escherichia coli strain O1:K1:H7 shares strong similarities with human extraintestinal pathogenic E. coli genomes.</title>
        <authorList>
            <person name="Johnson T.J."/>
            <person name="Kariyawasam S."/>
            <person name="Wannemuehler Y."/>
            <person name="Mangiamele P."/>
            <person name="Johnson S.J."/>
            <person name="Doetkott C."/>
            <person name="Skyberg J.A."/>
            <person name="Lynne A.M."/>
            <person name="Johnson J.R."/>
            <person name="Nolan L.K."/>
        </authorList>
    </citation>
    <scope>NUCLEOTIDE SEQUENCE [LARGE SCALE GENOMIC DNA]</scope>
</reference>
<evidence type="ECO:0000250" key="1"/>
<evidence type="ECO:0000305" key="2"/>
<proteinExistence type="inferred from homology"/>
<comment type="function">
    <text evidence="1">Serine hydrolase involved in the detoxification of formaldehyde. Hydrolyzes S-formylglutathione to glutathione and formate (By similarity).</text>
</comment>
<comment type="catalytic activity">
    <reaction>
        <text>S-formylglutathione + H2O = formate + glutathione + H(+)</text>
        <dbReference type="Rhea" id="RHEA:14961"/>
        <dbReference type="ChEBI" id="CHEBI:15377"/>
        <dbReference type="ChEBI" id="CHEBI:15378"/>
        <dbReference type="ChEBI" id="CHEBI:15740"/>
        <dbReference type="ChEBI" id="CHEBI:57688"/>
        <dbReference type="ChEBI" id="CHEBI:57925"/>
        <dbReference type="EC" id="3.1.2.12"/>
    </reaction>
</comment>
<comment type="similarity">
    <text evidence="2">Belongs to the esterase D family.</text>
</comment>
<accession>A1A834</accession>
<name>SFGH1_ECOK1</name>